<sequence length="325" mass="36158">MKVNLDRTSSGFCIGVQGTIHLAEEKLREHDGKLYCLGDIVHNEVEVKRLEELGLITIDLNEYSALTNAPVLIRAHGEPPSTYTTAKSNQLDVTDSTCPVVAKLQRSARMLHNRGYQIIIYGKKNHPEVIGINGQCDNQAIIIKHPDLSAPEETAPLDFTRRTALISQTTMDVPGFAMLKENLERLFSASAGPGERHAASHWQDIRDIDLTAEITGVRPLPKFLYKDTICRQVSSRNSKLHDFAAQNDVVIFVAGKKSSNGQVLFNICKASNPRTYFAEDEKDIQDEWLLENRQPVQSAGVCGATSTPMWLLEKVARSIESRFSS</sequence>
<gene>
    <name evidence="1" type="primary">ispH</name>
    <name type="ordered locus">Paes_0419</name>
</gene>
<proteinExistence type="inferred from homology"/>
<reference key="1">
    <citation type="submission" date="2008-06" db="EMBL/GenBank/DDBJ databases">
        <title>Complete sequence of chromosome of Prosthecochloris aestuarii DSM 271.</title>
        <authorList>
            <consortium name="US DOE Joint Genome Institute"/>
            <person name="Lucas S."/>
            <person name="Copeland A."/>
            <person name="Lapidus A."/>
            <person name="Glavina del Rio T."/>
            <person name="Dalin E."/>
            <person name="Tice H."/>
            <person name="Bruce D."/>
            <person name="Goodwin L."/>
            <person name="Pitluck S."/>
            <person name="Schmutz J."/>
            <person name="Larimer F."/>
            <person name="Land M."/>
            <person name="Hauser L."/>
            <person name="Kyrpides N."/>
            <person name="Anderson I."/>
            <person name="Liu Z."/>
            <person name="Li T."/>
            <person name="Zhao F."/>
            <person name="Overmann J."/>
            <person name="Bryant D.A."/>
            <person name="Richardson P."/>
        </authorList>
    </citation>
    <scope>NUCLEOTIDE SEQUENCE [LARGE SCALE GENOMIC DNA]</scope>
    <source>
        <strain>DSM 271 / SK 413</strain>
    </source>
</reference>
<dbReference type="EC" id="1.17.7.4" evidence="1"/>
<dbReference type="EMBL" id="CP001108">
    <property type="protein sequence ID" value="ACF45476.1"/>
    <property type="molecule type" value="Genomic_DNA"/>
</dbReference>
<dbReference type="RefSeq" id="WP_012505013.1">
    <property type="nucleotide sequence ID" value="NC_011059.1"/>
</dbReference>
<dbReference type="SMR" id="B4S4X8"/>
<dbReference type="STRING" id="290512.Paes_0419"/>
<dbReference type="KEGG" id="paa:Paes_0419"/>
<dbReference type="eggNOG" id="COG0761">
    <property type="taxonomic scope" value="Bacteria"/>
</dbReference>
<dbReference type="HOGENOM" id="CLU_027486_0_1_10"/>
<dbReference type="UniPathway" id="UPA00056">
    <property type="reaction ID" value="UER00097"/>
</dbReference>
<dbReference type="UniPathway" id="UPA00059">
    <property type="reaction ID" value="UER00105"/>
</dbReference>
<dbReference type="Proteomes" id="UP000002725">
    <property type="component" value="Chromosome"/>
</dbReference>
<dbReference type="GO" id="GO:0051539">
    <property type="term" value="F:4 iron, 4 sulfur cluster binding"/>
    <property type="evidence" value="ECO:0007669"/>
    <property type="project" value="UniProtKB-UniRule"/>
</dbReference>
<dbReference type="GO" id="GO:0051745">
    <property type="term" value="F:4-hydroxy-3-methylbut-2-enyl diphosphate reductase activity"/>
    <property type="evidence" value="ECO:0007669"/>
    <property type="project" value="UniProtKB-UniRule"/>
</dbReference>
<dbReference type="GO" id="GO:0046872">
    <property type="term" value="F:metal ion binding"/>
    <property type="evidence" value="ECO:0007669"/>
    <property type="project" value="UniProtKB-KW"/>
</dbReference>
<dbReference type="GO" id="GO:0050992">
    <property type="term" value="P:dimethylallyl diphosphate biosynthetic process"/>
    <property type="evidence" value="ECO:0007669"/>
    <property type="project" value="UniProtKB-UniRule"/>
</dbReference>
<dbReference type="GO" id="GO:0019288">
    <property type="term" value="P:isopentenyl diphosphate biosynthetic process, methylerythritol 4-phosphate pathway"/>
    <property type="evidence" value="ECO:0007669"/>
    <property type="project" value="UniProtKB-UniRule"/>
</dbReference>
<dbReference type="GO" id="GO:0016114">
    <property type="term" value="P:terpenoid biosynthetic process"/>
    <property type="evidence" value="ECO:0007669"/>
    <property type="project" value="UniProtKB-UniRule"/>
</dbReference>
<dbReference type="CDD" id="cd13944">
    <property type="entry name" value="lytB_ispH"/>
    <property type="match status" value="1"/>
</dbReference>
<dbReference type="Gene3D" id="3.40.50.11270">
    <property type="match status" value="1"/>
</dbReference>
<dbReference type="Gene3D" id="3.40.1010.20">
    <property type="entry name" value="4-hydroxy-3-methylbut-2-enyl diphosphate reductase, catalytic domain"/>
    <property type="match status" value="2"/>
</dbReference>
<dbReference type="HAMAP" id="MF_00191">
    <property type="entry name" value="IspH"/>
    <property type="match status" value="1"/>
</dbReference>
<dbReference type="InterPro" id="IPR003451">
    <property type="entry name" value="LytB/IspH"/>
</dbReference>
<dbReference type="NCBIfam" id="TIGR00216">
    <property type="entry name" value="ispH_lytB"/>
    <property type="match status" value="1"/>
</dbReference>
<dbReference type="NCBIfam" id="NF002187">
    <property type="entry name" value="PRK01045.1-1"/>
    <property type="match status" value="1"/>
</dbReference>
<dbReference type="PANTHER" id="PTHR30426">
    <property type="entry name" value="4-HYDROXY-3-METHYLBUT-2-ENYL DIPHOSPHATE REDUCTASE"/>
    <property type="match status" value="1"/>
</dbReference>
<dbReference type="PANTHER" id="PTHR30426:SF0">
    <property type="entry name" value="4-HYDROXY-3-METHYLBUT-2-ENYL DIPHOSPHATE REDUCTASE"/>
    <property type="match status" value="1"/>
</dbReference>
<dbReference type="Pfam" id="PF02401">
    <property type="entry name" value="LYTB"/>
    <property type="match status" value="1"/>
</dbReference>
<accession>B4S4X8</accession>
<feature type="chain" id="PRO_1000098963" description="4-hydroxy-3-methylbut-2-enyl diphosphate reductase">
    <location>
        <begin position="1"/>
        <end position="325"/>
    </location>
</feature>
<feature type="active site" description="Proton donor" evidence="1">
    <location>
        <position position="128"/>
    </location>
</feature>
<feature type="binding site" evidence="1">
    <location>
        <position position="13"/>
    </location>
    <ligand>
        <name>[4Fe-4S] cluster</name>
        <dbReference type="ChEBI" id="CHEBI:49883"/>
    </ligand>
</feature>
<feature type="binding site" evidence="1">
    <location>
        <position position="42"/>
    </location>
    <ligand>
        <name>(2E)-4-hydroxy-3-methylbut-2-enyl diphosphate</name>
        <dbReference type="ChEBI" id="CHEBI:128753"/>
    </ligand>
</feature>
<feature type="binding site" evidence="1">
    <location>
        <position position="42"/>
    </location>
    <ligand>
        <name>dimethylallyl diphosphate</name>
        <dbReference type="ChEBI" id="CHEBI:57623"/>
    </ligand>
</feature>
<feature type="binding site" evidence="1">
    <location>
        <position position="42"/>
    </location>
    <ligand>
        <name>isopentenyl diphosphate</name>
        <dbReference type="ChEBI" id="CHEBI:128769"/>
    </ligand>
</feature>
<feature type="binding site" evidence="1">
    <location>
        <position position="76"/>
    </location>
    <ligand>
        <name>(2E)-4-hydroxy-3-methylbut-2-enyl diphosphate</name>
        <dbReference type="ChEBI" id="CHEBI:128753"/>
    </ligand>
</feature>
<feature type="binding site" evidence="1">
    <location>
        <position position="76"/>
    </location>
    <ligand>
        <name>dimethylallyl diphosphate</name>
        <dbReference type="ChEBI" id="CHEBI:57623"/>
    </ligand>
</feature>
<feature type="binding site" evidence="1">
    <location>
        <position position="76"/>
    </location>
    <ligand>
        <name>isopentenyl diphosphate</name>
        <dbReference type="ChEBI" id="CHEBI:128769"/>
    </ligand>
</feature>
<feature type="binding site" evidence="1">
    <location>
        <position position="98"/>
    </location>
    <ligand>
        <name>[4Fe-4S] cluster</name>
        <dbReference type="ChEBI" id="CHEBI:49883"/>
    </ligand>
</feature>
<feature type="binding site" evidence="1">
    <location>
        <position position="126"/>
    </location>
    <ligand>
        <name>(2E)-4-hydroxy-3-methylbut-2-enyl diphosphate</name>
        <dbReference type="ChEBI" id="CHEBI:128753"/>
    </ligand>
</feature>
<feature type="binding site" evidence="1">
    <location>
        <position position="126"/>
    </location>
    <ligand>
        <name>dimethylallyl diphosphate</name>
        <dbReference type="ChEBI" id="CHEBI:57623"/>
    </ligand>
</feature>
<feature type="binding site" evidence="1">
    <location>
        <position position="126"/>
    </location>
    <ligand>
        <name>isopentenyl diphosphate</name>
        <dbReference type="ChEBI" id="CHEBI:128769"/>
    </ligand>
</feature>
<feature type="binding site" evidence="1">
    <location>
        <position position="169"/>
    </location>
    <ligand>
        <name>(2E)-4-hydroxy-3-methylbut-2-enyl diphosphate</name>
        <dbReference type="ChEBI" id="CHEBI:128753"/>
    </ligand>
</feature>
<feature type="binding site" evidence="1">
    <location>
        <position position="230"/>
    </location>
    <ligand>
        <name>[4Fe-4S] cluster</name>
        <dbReference type="ChEBI" id="CHEBI:49883"/>
    </ligand>
</feature>
<feature type="binding site" evidence="1">
    <location>
        <position position="258"/>
    </location>
    <ligand>
        <name>(2E)-4-hydroxy-3-methylbut-2-enyl diphosphate</name>
        <dbReference type="ChEBI" id="CHEBI:128753"/>
    </ligand>
</feature>
<feature type="binding site" evidence="1">
    <location>
        <position position="258"/>
    </location>
    <ligand>
        <name>dimethylallyl diphosphate</name>
        <dbReference type="ChEBI" id="CHEBI:57623"/>
    </ligand>
</feature>
<feature type="binding site" evidence="1">
    <location>
        <position position="258"/>
    </location>
    <ligand>
        <name>isopentenyl diphosphate</name>
        <dbReference type="ChEBI" id="CHEBI:128769"/>
    </ligand>
</feature>
<feature type="binding site" evidence="1">
    <location>
        <position position="259"/>
    </location>
    <ligand>
        <name>(2E)-4-hydroxy-3-methylbut-2-enyl diphosphate</name>
        <dbReference type="ChEBI" id="CHEBI:128753"/>
    </ligand>
</feature>
<feature type="binding site" evidence="1">
    <location>
        <position position="259"/>
    </location>
    <ligand>
        <name>dimethylallyl diphosphate</name>
        <dbReference type="ChEBI" id="CHEBI:57623"/>
    </ligand>
</feature>
<feature type="binding site" evidence="1">
    <location>
        <position position="259"/>
    </location>
    <ligand>
        <name>isopentenyl diphosphate</name>
        <dbReference type="ChEBI" id="CHEBI:128769"/>
    </ligand>
</feature>
<feature type="binding site" evidence="1">
    <location>
        <position position="260"/>
    </location>
    <ligand>
        <name>(2E)-4-hydroxy-3-methylbut-2-enyl diphosphate</name>
        <dbReference type="ChEBI" id="CHEBI:128753"/>
    </ligand>
</feature>
<feature type="binding site" evidence="1">
    <location>
        <position position="260"/>
    </location>
    <ligand>
        <name>dimethylallyl diphosphate</name>
        <dbReference type="ChEBI" id="CHEBI:57623"/>
    </ligand>
</feature>
<feature type="binding site" evidence="1">
    <location>
        <position position="260"/>
    </location>
    <ligand>
        <name>isopentenyl diphosphate</name>
        <dbReference type="ChEBI" id="CHEBI:128769"/>
    </ligand>
</feature>
<feature type="binding site" evidence="1">
    <location>
        <position position="306"/>
    </location>
    <ligand>
        <name>(2E)-4-hydroxy-3-methylbut-2-enyl diphosphate</name>
        <dbReference type="ChEBI" id="CHEBI:128753"/>
    </ligand>
</feature>
<feature type="binding site" evidence="1">
    <location>
        <position position="306"/>
    </location>
    <ligand>
        <name>dimethylallyl diphosphate</name>
        <dbReference type="ChEBI" id="CHEBI:57623"/>
    </ligand>
</feature>
<feature type="binding site" evidence="1">
    <location>
        <position position="306"/>
    </location>
    <ligand>
        <name>isopentenyl diphosphate</name>
        <dbReference type="ChEBI" id="CHEBI:128769"/>
    </ligand>
</feature>
<keyword id="KW-0004">4Fe-4S</keyword>
<keyword id="KW-0408">Iron</keyword>
<keyword id="KW-0411">Iron-sulfur</keyword>
<keyword id="KW-0414">Isoprene biosynthesis</keyword>
<keyword id="KW-0479">Metal-binding</keyword>
<keyword id="KW-0560">Oxidoreductase</keyword>
<evidence type="ECO:0000255" key="1">
    <source>
        <dbReference type="HAMAP-Rule" id="MF_00191"/>
    </source>
</evidence>
<comment type="function">
    <text evidence="1">Catalyzes the conversion of 1-hydroxy-2-methyl-2-(E)-butenyl 4-diphosphate (HMBPP) into a mixture of isopentenyl diphosphate (IPP) and dimethylallyl diphosphate (DMAPP). Acts in the terminal step of the DOXP/MEP pathway for isoprenoid precursor biosynthesis.</text>
</comment>
<comment type="catalytic activity">
    <reaction evidence="1">
        <text>isopentenyl diphosphate + 2 oxidized [2Fe-2S]-[ferredoxin] + H2O = (2E)-4-hydroxy-3-methylbut-2-enyl diphosphate + 2 reduced [2Fe-2S]-[ferredoxin] + 2 H(+)</text>
        <dbReference type="Rhea" id="RHEA:24488"/>
        <dbReference type="Rhea" id="RHEA-COMP:10000"/>
        <dbReference type="Rhea" id="RHEA-COMP:10001"/>
        <dbReference type="ChEBI" id="CHEBI:15377"/>
        <dbReference type="ChEBI" id="CHEBI:15378"/>
        <dbReference type="ChEBI" id="CHEBI:33737"/>
        <dbReference type="ChEBI" id="CHEBI:33738"/>
        <dbReference type="ChEBI" id="CHEBI:128753"/>
        <dbReference type="ChEBI" id="CHEBI:128769"/>
        <dbReference type="EC" id="1.17.7.4"/>
    </reaction>
</comment>
<comment type="catalytic activity">
    <reaction evidence="1">
        <text>dimethylallyl diphosphate + 2 oxidized [2Fe-2S]-[ferredoxin] + H2O = (2E)-4-hydroxy-3-methylbut-2-enyl diphosphate + 2 reduced [2Fe-2S]-[ferredoxin] + 2 H(+)</text>
        <dbReference type="Rhea" id="RHEA:24825"/>
        <dbReference type="Rhea" id="RHEA-COMP:10000"/>
        <dbReference type="Rhea" id="RHEA-COMP:10001"/>
        <dbReference type="ChEBI" id="CHEBI:15377"/>
        <dbReference type="ChEBI" id="CHEBI:15378"/>
        <dbReference type="ChEBI" id="CHEBI:33737"/>
        <dbReference type="ChEBI" id="CHEBI:33738"/>
        <dbReference type="ChEBI" id="CHEBI:57623"/>
        <dbReference type="ChEBI" id="CHEBI:128753"/>
        <dbReference type="EC" id="1.17.7.4"/>
    </reaction>
</comment>
<comment type="cofactor">
    <cofactor evidence="1">
        <name>[4Fe-4S] cluster</name>
        <dbReference type="ChEBI" id="CHEBI:49883"/>
    </cofactor>
    <text evidence="1">Binds 1 [4Fe-4S] cluster per subunit.</text>
</comment>
<comment type="pathway">
    <text evidence="1">Isoprenoid biosynthesis; dimethylallyl diphosphate biosynthesis; dimethylallyl diphosphate from (2E)-4-hydroxy-3-methylbutenyl diphosphate: step 1/1.</text>
</comment>
<comment type="pathway">
    <text evidence="1">Isoprenoid biosynthesis; isopentenyl diphosphate biosynthesis via DXP pathway; isopentenyl diphosphate from 1-deoxy-D-xylulose 5-phosphate: step 6/6.</text>
</comment>
<comment type="similarity">
    <text evidence="1">Belongs to the IspH family.</text>
</comment>
<protein>
    <recommendedName>
        <fullName evidence="1">4-hydroxy-3-methylbut-2-enyl diphosphate reductase</fullName>
        <shortName evidence="1">HMBPP reductase</shortName>
        <ecNumber evidence="1">1.17.7.4</ecNumber>
    </recommendedName>
</protein>
<organism>
    <name type="scientific">Prosthecochloris aestuarii (strain DSM 271 / SK 413)</name>
    <dbReference type="NCBI Taxonomy" id="290512"/>
    <lineage>
        <taxon>Bacteria</taxon>
        <taxon>Pseudomonadati</taxon>
        <taxon>Chlorobiota</taxon>
        <taxon>Chlorobiia</taxon>
        <taxon>Chlorobiales</taxon>
        <taxon>Chlorobiaceae</taxon>
        <taxon>Prosthecochloris</taxon>
    </lineage>
</organism>
<name>ISPH_PROA2</name>